<comment type="function">
    <text>May be a cell surface adhesion protein.</text>
</comment>
<comment type="subcellular location">
    <subcellularLocation>
        <location evidence="4">Cell membrane</location>
        <topology evidence="4">Lipid-anchor</topology>
        <topology evidence="4">GPI-anchor</topology>
    </subcellularLocation>
</comment>
<comment type="similarity">
    <text evidence="4">Belongs to the fasciclin-like AGP family.</text>
</comment>
<feature type="signal peptide" evidence="1">
    <location>
        <begin position="1"/>
        <end position="24"/>
    </location>
</feature>
<feature type="chain" id="PRO_0000253863" description="Fasciclin-like arabinogalactan protein 3">
    <location>
        <begin position="25"/>
        <end position="256"/>
    </location>
</feature>
<feature type="propeptide" id="PRO_0000253864" description="Removed in mature form" evidence="1">
    <location>
        <begin position="257"/>
        <end position="280"/>
    </location>
</feature>
<feature type="domain" description="FAS1" evidence="2">
    <location>
        <begin position="25"/>
        <end position="169"/>
    </location>
</feature>
<feature type="region of interest" description="Disordered" evidence="3">
    <location>
        <begin position="180"/>
        <end position="262"/>
    </location>
</feature>
<feature type="compositionally biased region" description="Pro residues" evidence="3">
    <location>
        <begin position="180"/>
        <end position="193"/>
    </location>
</feature>
<feature type="compositionally biased region" description="Low complexity" evidence="3">
    <location>
        <begin position="219"/>
        <end position="234"/>
    </location>
</feature>
<feature type="lipid moiety-binding region" description="GPI-anchor amidated serine" evidence="1">
    <location>
        <position position="256"/>
    </location>
</feature>
<feature type="glycosylation site" description="N-linked (GlcNAc...) asparagine" evidence="1">
    <location>
        <position position="26"/>
    </location>
</feature>
<feature type="glycosylation site" description="N-linked (GlcNAc...) asparagine" evidence="1">
    <location>
        <position position="126"/>
    </location>
</feature>
<feature type="glycosylation site" description="N-linked (GlcNAc...) asparagine" evidence="1">
    <location>
        <position position="159"/>
    </location>
</feature>
<sequence length="280" mass="29170">MGLKVSSSLLCLTILLAVSSIVSAVNITRVLEKYPEFSTMTELLAKTELTPIINKRQTITVLALNNDAIGSISGRPEEEVKNILMNHVVLDYFDELKLKALKEKSTLLTTLYQSTGLGQQQNGFLNCTKSNGKIYFGSGVKGAPQTAEYITTVFRNPYNLSVVQISMPIVAPGLGSPVKVPPPPPMSSPPAPSPKKGAATPAPAPADEGDYADAPPGLAPETAPASAPSESDSPAPAPDKSGKKKMAAADEAEPPSSASNTGLSFGAVLVLGFVASFVGF</sequence>
<dbReference type="EMBL" id="AC006403">
    <property type="protein sequence ID" value="AAD18116.1"/>
    <property type="molecule type" value="Genomic_DNA"/>
</dbReference>
<dbReference type="EMBL" id="CP002685">
    <property type="protein sequence ID" value="AEC07579.1"/>
    <property type="molecule type" value="Genomic_DNA"/>
</dbReference>
<dbReference type="EMBL" id="BT012135">
    <property type="protein sequence ID" value="AAS76230.1"/>
    <property type="molecule type" value="mRNA"/>
</dbReference>
<dbReference type="EMBL" id="BT012411">
    <property type="protein sequence ID" value="AAS92327.1"/>
    <property type="molecule type" value="mRNA"/>
</dbReference>
<dbReference type="EMBL" id="AK228445">
    <property type="protein sequence ID" value="BAF00374.1"/>
    <property type="molecule type" value="mRNA"/>
</dbReference>
<dbReference type="EMBL" id="AK229668">
    <property type="protein sequence ID" value="BAF01512.1"/>
    <property type="molecule type" value="mRNA"/>
</dbReference>
<dbReference type="PIR" id="G84636">
    <property type="entry name" value="G84636"/>
</dbReference>
<dbReference type="RefSeq" id="NP_180021.1">
    <property type="nucleotide sequence ID" value="NM_128006.5"/>
</dbReference>
<dbReference type="SMR" id="Q9ZQ23"/>
<dbReference type="FunCoup" id="Q9ZQ23">
    <property type="interactions" value="44"/>
</dbReference>
<dbReference type="STRING" id="3702.Q9ZQ23"/>
<dbReference type="GlyCosmos" id="Q9ZQ23">
    <property type="glycosylation" value="3 sites, No reported glycans"/>
</dbReference>
<dbReference type="GlyGen" id="Q9ZQ23">
    <property type="glycosylation" value="3 sites"/>
</dbReference>
<dbReference type="PaxDb" id="3702-AT2G24450.1"/>
<dbReference type="ProteomicsDB" id="230949"/>
<dbReference type="EnsemblPlants" id="AT2G24450.1">
    <property type="protein sequence ID" value="AT2G24450.1"/>
    <property type="gene ID" value="AT2G24450"/>
</dbReference>
<dbReference type="GeneID" id="816981"/>
<dbReference type="Gramene" id="AT2G24450.1">
    <property type="protein sequence ID" value="AT2G24450.1"/>
    <property type="gene ID" value="AT2G24450"/>
</dbReference>
<dbReference type="KEGG" id="ath:AT2G24450"/>
<dbReference type="Araport" id="AT2G24450"/>
<dbReference type="TAIR" id="AT2G24450">
    <property type="gene designation" value="FLA3"/>
</dbReference>
<dbReference type="eggNOG" id="ENOG502RZZR">
    <property type="taxonomic scope" value="Eukaryota"/>
</dbReference>
<dbReference type="HOGENOM" id="CLU_058119_0_0_1"/>
<dbReference type="InParanoid" id="Q9ZQ23"/>
<dbReference type="OMA" id="AFNINKM"/>
<dbReference type="OrthoDB" id="694090at2759"/>
<dbReference type="PhylomeDB" id="Q9ZQ23"/>
<dbReference type="PRO" id="PR:Q9ZQ23"/>
<dbReference type="Proteomes" id="UP000006548">
    <property type="component" value="Chromosome 2"/>
</dbReference>
<dbReference type="ExpressionAtlas" id="Q9ZQ23">
    <property type="expression patterns" value="baseline and differential"/>
</dbReference>
<dbReference type="GO" id="GO:0005886">
    <property type="term" value="C:plasma membrane"/>
    <property type="evidence" value="ECO:0007669"/>
    <property type="project" value="UniProtKB-SubCell"/>
</dbReference>
<dbReference type="GO" id="GO:0098552">
    <property type="term" value="C:side of membrane"/>
    <property type="evidence" value="ECO:0007669"/>
    <property type="project" value="UniProtKB-KW"/>
</dbReference>
<dbReference type="FunFam" id="2.30.180.10:FF:000015">
    <property type="entry name" value="Fasciclin-like arabinogalactan protein 3"/>
    <property type="match status" value="1"/>
</dbReference>
<dbReference type="Gene3D" id="2.30.180.10">
    <property type="entry name" value="FAS1 domain"/>
    <property type="match status" value="1"/>
</dbReference>
<dbReference type="InterPro" id="IPR036378">
    <property type="entry name" value="FAS1_dom_sf"/>
</dbReference>
<dbReference type="InterPro" id="IPR000782">
    <property type="entry name" value="FAS1_domain"/>
</dbReference>
<dbReference type="InterPro" id="IPR033254">
    <property type="entry name" value="Plant_FLA"/>
</dbReference>
<dbReference type="PANTHER" id="PTHR32382">
    <property type="entry name" value="FASCICLIN-LIKE ARABINOGALACTAN PROTEIN"/>
    <property type="match status" value="1"/>
</dbReference>
<dbReference type="PANTHER" id="PTHR32382:SF67">
    <property type="entry name" value="FASCICLIN-LIKE ARABINOGALACTAN PROTEIN 3"/>
    <property type="match status" value="1"/>
</dbReference>
<dbReference type="Pfam" id="PF02469">
    <property type="entry name" value="Fasciclin"/>
    <property type="match status" value="1"/>
</dbReference>
<dbReference type="SUPFAM" id="SSF82153">
    <property type="entry name" value="FAS1 domain"/>
    <property type="match status" value="1"/>
</dbReference>
<dbReference type="PROSITE" id="PS50213">
    <property type="entry name" value="FAS1"/>
    <property type="match status" value="1"/>
</dbReference>
<proteinExistence type="evidence at transcript level"/>
<accession>Q9ZQ23</accession>
<organism>
    <name type="scientific">Arabidopsis thaliana</name>
    <name type="common">Mouse-ear cress</name>
    <dbReference type="NCBI Taxonomy" id="3702"/>
    <lineage>
        <taxon>Eukaryota</taxon>
        <taxon>Viridiplantae</taxon>
        <taxon>Streptophyta</taxon>
        <taxon>Embryophyta</taxon>
        <taxon>Tracheophyta</taxon>
        <taxon>Spermatophyta</taxon>
        <taxon>Magnoliopsida</taxon>
        <taxon>eudicotyledons</taxon>
        <taxon>Gunneridae</taxon>
        <taxon>Pentapetalae</taxon>
        <taxon>rosids</taxon>
        <taxon>malvids</taxon>
        <taxon>Brassicales</taxon>
        <taxon>Brassicaceae</taxon>
        <taxon>Camelineae</taxon>
        <taxon>Arabidopsis</taxon>
    </lineage>
</organism>
<name>FLA3_ARATH</name>
<gene>
    <name type="primary">FLA3</name>
    <name type="ordered locus">At2g24450</name>
    <name type="ORF">T28I24.18</name>
</gene>
<keyword id="KW-1003">Cell membrane</keyword>
<keyword id="KW-0325">Glycoprotein</keyword>
<keyword id="KW-0336">GPI-anchor</keyword>
<keyword id="KW-0449">Lipoprotein</keyword>
<keyword id="KW-0472">Membrane</keyword>
<keyword id="KW-0654">Proteoglycan</keyword>
<keyword id="KW-1185">Reference proteome</keyword>
<keyword id="KW-0732">Signal</keyword>
<reference key="1">
    <citation type="journal article" date="1999" name="Nature">
        <title>Sequence and analysis of chromosome 2 of the plant Arabidopsis thaliana.</title>
        <authorList>
            <person name="Lin X."/>
            <person name="Kaul S."/>
            <person name="Rounsley S.D."/>
            <person name="Shea T.P."/>
            <person name="Benito M.-I."/>
            <person name="Town C.D."/>
            <person name="Fujii C.Y."/>
            <person name="Mason T.M."/>
            <person name="Bowman C.L."/>
            <person name="Barnstead M.E."/>
            <person name="Feldblyum T.V."/>
            <person name="Buell C.R."/>
            <person name="Ketchum K.A."/>
            <person name="Lee J.J."/>
            <person name="Ronning C.M."/>
            <person name="Koo H.L."/>
            <person name="Moffat K.S."/>
            <person name="Cronin L.A."/>
            <person name="Shen M."/>
            <person name="Pai G."/>
            <person name="Van Aken S."/>
            <person name="Umayam L."/>
            <person name="Tallon L.J."/>
            <person name="Gill J.E."/>
            <person name="Adams M.D."/>
            <person name="Carrera A.J."/>
            <person name="Creasy T.H."/>
            <person name="Goodman H.M."/>
            <person name="Somerville C.R."/>
            <person name="Copenhaver G.P."/>
            <person name="Preuss D."/>
            <person name="Nierman W.C."/>
            <person name="White O."/>
            <person name="Eisen J.A."/>
            <person name="Salzberg S.L."/>
            <person name="Fraser C.M."/>
            <person name="Venter J.C."/>
        </authorList>
    </citation>
    <scope>NUCLEOTIDE SEQUENCE [LARGE SCALE GENOMIC DNA]</scope>
    <source>
        <strain>cv. Columbia</strain>
    </source>
</reference>
<reference key="2">
    <citation type="journal article" date="2017" name="Plant J.">
        <title>Araport11: a complete reannotation of the Arabidopsis thaliana reference genome.</title>
        <authorList>
            <person name="Cheng C.Y."/>
            <person name="Krishnakumar V."/>
            <person name="Chan A.P."/>
            <person name="Thibaud-Nissen F."/>
            <person name="Schobel S."/>
            <person name="Town C.D."/>
        </authorList>
    </citation>
    <scope>GENOME REANNOTATION</scope>
    <source>
        <strain>cv. Columbia</strain>
    </source>
</reference>
<reference key="3">
    <citation type="submission" date="2004-04" db="EMBL/GenBank/DDBJ databases">
        <title>Arabidopsis cDNA clones.</title>
        <authorList>
            <person name="Shinn P."/>
            <person name="Chen H."/>
            <person name="Cheuk R.F."/>
            <person name="Kim C.J."/>
            <person name="Ecker J.R."/>
        </authorList>
    </citation>
    <scope>NUCLEOTIDE SEQUENCE [LARGE SCALE MRNA]</scope>
    <source>
        <strain>cv. Columbia</strain>
    </source>
</reference>
<reference key="4">
    <citation type="submission" date="2006-07" db="EMBL/GenBank/DDBJ databases">
        <title>Large-scale analysis of RIKEN Arabidopsis full-length (RAFL) cDNAs.</title>
        <authorList>
            <person name="Totoki Y."/>
            <person name="Seki M."/>
            <person name="Ishida J."/>
            <person name="Nakajima M."/>
            <person name="Enju A."/>
            <person name="Kamiya A."/>
            <person name="Narusaka M."/>
            <person name="Shin-i T."/>
            <person name="Nakagawa M."/>
            <person name="Sakamoto N."/>
            <person name="Oishi K."/>
            <person name="Kohara Y."/>
            <person name="Kobayashi M."/>
            <person name="Toyoda A."/>
            <person name="Sakaki Y."/>
            <person name="Sakurai T."/>
            <person name="Iida K."/>
            <person name="Akiyama K."/>
            <person name="Satou M."/>
            <person name="Toyoda T."/>
            <person name="Konagaya A."/>
            <person name="Carninci P."/>
            <person name="Kawai J."/>
            <person name="Hayashizaki Y."/>
            <person name="Shinozaki K."/>
        </authorList>
    </citation>
    <scope>NUCLEOTIDE SEQUENCE [LARGE SCALE MRNA]</scope>
    <source>
        <strain>cv. Columbia</strain>
    </source>
</reference>
<reference key="5">
    <citation type="journal article" date="2003" name="Plant Physiol.">
        <title>The fasciclin-like arabinogalactan proteins of Arabidopsis. A multigene family of putative cell adhesion molecules.</title>
        <authorList>
            <person name="Johnson K.L."/>
            <person name="Jones B.J."/>
            <person name="Bacic A."/>
            <person name="Schultz C.J."/>
        </authorList>
    </citation>
    <scope>GENE FAMILY ORGANIZATION</scope>
    <scope>NOMENCLATURE</scope>
</reference>
<evidence type="ECO:0000255" key="1"/>
<evidence type="ECO:0000255" key="2">
    <source>
        <dbReference type="PROSITE-ProRule" id="PRU00082"/>
    </source>
</evidence>
<evidence type="ECO:0000256" key="3">
    <source>
        <dbReference type="SAM" id="MobiDB-lite"/>
    </source>
</evidence>
<evidence type="ECO:0000305" key="4"/>
<protein>
    <recommendedName>
        <fullName>Fasciclin-like arabinogalactan protein 3</fullName>
    </recommendedName>
</protein>